<evidence type="ECO:0000255" key="1">
    <source>
        <dbReference type="HAMAP-Rule" id="MF_00294"/>
    </source>
</evidence>
<evidence type="ECO:0000305" key="2"/>
<dbReference type="EMBL" id="AY780259">
    <property type="protein sequence ID" value="AAX21049.1"/>
    <property type="molecule type" value="Genomic_DNA"/>
</dbReference>
<dbReference type="RefSeq" id="YP_636319.1">
    <property type="nucleotide sequence ID" value="NC_008115.1"/>
</dbReference>
<dbReference type="GeneID" id="4108405"/>
<dbReference type="GO" id="GO:0009507">
    <property type="term" value="C:chloroplast"/>
    <property type="evidence" value="ECO:0007669"/>
    <property type="project" value="UniProtKB-SubCell"/>
</dbReference>
<dbReference type="GO" id="GO:1990904">
    <property type="term" value="C:ribonucleoprotein complex"/>
    <property type="evidence" value="ECO:0007669"/>
    <property type="project" value="UniProtKB-KW"/>
</dbReference>
<dbReference type="GO" id="GO:0005840">
    <property type="term" value="C:ribosome"/>
    <property type="evidence" value="ECO:0007669"/>
    <property type="project" value="UniProtKB-KW"/>
</dbReference>
<dbReference type="GO" id="GO:0003735">
    <property type="term" value="F:structural constituent of ribosome"/>
    <property type="evidence" value="ECO:0007669"/>
    <property type="project" value="InterPro"/>
</dbReference>
<dbReference type="GO" id="GO:0006412">
    <property type="term" value="P:translation"/>
    <property type="evidence" value="ECO:0007669"/>
    <property type="project" value="UniProtKB-UniRule"/>
</dbReference>
<dbReference type="Gene3D" id="2.20.28.120">
    <property type="entry name" value="Ribosomal protein L33"/>
    <property type="match status" value="1"/>
</dbReference>
<dbReference type="HAMAP" id="MF_00294">
    <property type="entry name" value="Ribosomal_bL33"/>
    <property type="match status" value="1"/>
</dbReference>
<dbReference type="InterPro" id="IPR001705">
    <property type="entry name" value="Ribosomal_bL33"/>
</dbReference>
<dbReference type="InterPro" id="IPR018264">
    <property type="entry name" value="Ribosomal_bL33_CS"/>
</dbReference>
<dbReference type="InterPro" id="IPR038584">
    <property type="entry name" value="Ribosomal_bL33_sf"/>
</dbReference>
<dbReference type="InterPro" id="IPR011332">
    <property type="entry name" value="Ribosomal_zn-bd"/>
</dbReference>
<dbReference type="NCBIfam" id="NF001764">
    <property type="entry name" value="PRK00504.1"/>
    <property type="match status" value="1"/>
</dbReference>
<dbReference type="NCBIfam" id="NF001860">
    <property type="entry name" value="PRK00595.1"/>
    <property type="match status" value="1"/>
</dbReference>
<dbReference type="NCBIfam" id="TIGR01023">
    <property type="entry name" value="rpmG_bact"/>
    <property type="match status" value="1"/>
</dbReference>
<dbReference type="PANTHER" id="PTHR43168">
    <property type="entry name" value="50S RIBOSOMAL PROTEIN L33, CHLOROPLASTIC"/>
    <property type="match status" value="1"/>
</dbReference>
<dbReference type="PANTHER" id="PTHR43168:SF2">
    <property type="entry name" value="LARGE RIBOSOMAL SUBUNIT PROTEIN BL33C"/>
    <property type="match status" value="1"/>
</dbReference>
<dbReference type="Pfam" id="PF00471">
    <property type="entry name" value="Ribosomal_L33"/>
    <property type="match status" value="1"/>
</dbReference>
<dbReference type="SUPFAM" id="SSF57829">
    <property type="entry name" value="Zn-binding ribosomal proteins"/>
    <property type="match status" value="1"/>
</dbReference>
<dbReference type="PROSITE" id="PS00582">
    <property type="entry name" value="RIBOSOMAL_L33"/>
    <property type="match status" value="1"/>
</dbReference>
<comment type="subcellular location">
    <subcellularLocation>
        <location>Plastid</location>
        <location>Chloroplast</location>
    </subcellularLocation>
</comment>
<comment type="similarity">
    <text evidence="1">Belongs to the bacterial ribosomal protein bL33 family.</text>
</comment>
<geneLocation type="chloroplast"/>
<proteinExistence type="inferred from homology"/>
<sequence length="66" mass="7707">MAKGKDVRVTVILECTNCVRTGLNKESRGVSRYITQKNRHNTPSRLELRKFCPYCYKHTIHGEIKK</sequence>
<name>RK33_EUCGG</name>
<reference key="1">
    <citation type="journal article" date="2005" name="DNA Res.">
        <title>Complete nucleotide sequence of the chloroplast genome from the Tasmanian blue gum, Eucalyptus globulus (Myrtaceae).</title>
        <authorList>
            <person name="Steane D.A."/>
        </authorList>
    </citation>
    <scope>NUCLEOTIDE SEQUENCE [LARGE SCALE GENOMIC DNA]</scope>
</reference>
<keyword id="KW-0150">Chloroplast</keyword>
<keyword id="KW-0934">Plastid</keyword>
<keyword id="KW-0687">Ribonucleoprotein</keyword>
<keyword id="KW-0689">Ribosomal protein</keyword>
<protein>
    <recommendedName>
        <fullName evidence="1">Large ribosomal subunit protein bL33c</fullName>
    </recommendedName>
    <alternativeName>
        <fullName evidence="2">50S ribosomal protein L33, chloroplastic</fullName>
    </alternativeName>
</protein>
<feature type="chain" id="PRO_0000276501" description="Large ribosomal subunit protein bL33c">
    <location>
        <begin position="1"/>
        <end position="66"/>
    </location>
</feature>
<accession>Q49KX8</accession>
<gene>
    <name evidence="1" type="primary">rpl33</name>
</gene>
<organism>
    <name type="scientific">Eucalyptus globulus subsp. globulus</name>
    <name type="common">Tasmanian blue gum</name>
    <dbReference type="NCBI Taxonomy" id="71271"/>
    <lineage>
        <taxon>Eukaryota</taxon>
        <taxon>Viridiplantae</taxon>
        <taxon>Streptophyta</taxon>
        <taxon>Embryophyta</taxon>
        <taxon>Tracheophyta</taxon>
        <taxon>Spermatophyta</taxon>
        <taxon>Magnoliopsida</taxon>
        <taxon>eudicotyledons</taxon>
        <taxon>Gunneridae</taxon>
        <taxon>Pentapetalae</taxon>
        <taxon>rosids</taxon>
        <taxon>malvids</taxon>
        <taxon>Myrtales</taxon>
        <taxon>Myrtaceae</taxon>
        <taxon>Myrtoideae</taxon>
        <taxon>Eucalypteae</taxon>
        <taxon>Eucalyptus</taxon>
    </lineage>
</organism>